<gene>
    <name type="primary">MTW1</name>
    <name type="synonym">DSN3</name>
    <name type="synonym">NSL2</name>
    <name type="ordered locus">YAL034W-A</name>
    <name type="ORF">YAL034AW</name>
</gene>
<proteinExistence type="evidence at protein level"/>
<comment type="function">
    <text evidence="4 5">Acts as an essential component of the kinetochore MIND complex, which is required for the spindle checkpoint and kinetochore integrity. MIND plays a role in establishing a bipolar spindle-kinetochore interaction by joining kinetochore subunits contacting DNA to those contacting microtubules.</text>
</comment>
<comment type="subunit">
    <text evidence="4 5 6">Component of the MIND kinetochore complex, which is composed of at least MTW1, NNF1, NSL1 and DSN1.</text>
</comment>
<comment type="interaction">
    <interactant intactId="EBI-11606">
        <id>P39731</id>
    </interactant>
    <interactant intactId="EBI-12098">
        <id>P47149</id>
        <label>NNF1</label>
    </interactant>
    <organismsDiffer>false</organismsDiffer>
    <experiments>7</experiments>
</comment>
<comment type="subcellular location">
    <subcellularLocation>
        <location evidence="4 6">Chromosome</location>
        <location evidence="4 6">Centromere</location>
        <location evidence="4 6">Kinetochore</location>
    </subcellularLocation>
    <subcellularLocation>
        <location evidence="2">Cytoplasm</location>
        <location evidence="2">Cytoskeleton</location>
        <location evidence="2">Spindle pole</location>
    </subcellularLocation>
    <text evidence="4 6">Associated with the kinetochore.</text>
</comment>
<comment type="miscellaneous">
    <text evidence="3">Present with 2610 molecules/cell in log phase SD medium.</text>
</comment>
<comment type="similarity">
    <text evidence="7">Belongs to the mis12 family.</text>
</comment>
<sequence length="289" mass="33243">MSAPTMRSTSILTEHLGYPPISLVDDIINAVNEIMYKCTAAMEKYLLSKSKIGEEDYGEEIKSGVAKLESLLENSVDKNFDKLELYVLRNVLRIPEEYLDANVFRLENQKDLVIVDENELKKSEEKLREKVNDVELAFKKNEMLLKRVTKVKRLLFTIRGFKQKLNELLKCKDDVQLQKILESLKPIDDTMTLLTDSLRKLYVDSESTSSTEEVEALLQRLKTNGKQNNKDFRTRYIDIRTNNVLRKLGLLGDKEDEKQSAKPDARTQAGDIVSIDIEEPQLDLLDDVL</sequence>
<reference key="1">
    <citation type="journal article" date="1999" name="Genes Dev.">
        <title>Proper metaphase spindle length is determined by centromere proteins Mis12 and Mis6 required for faithful chromosome segregation.</title>
        <authorList>
            <person name="Goshima G."/>
            <person name="Saitoh S."/>
            <person name="Yanagida M."/>
        </authorList>
    </citation>
    <scope>NUCLEOTIDE SEQUENCE [GENOMIC DNA]</scope>
    <source>
        <strain>ATCC 208353 / W303-1A</strain>
    </source>
</reference>
<reference key="2">
    <citation type="journal article" date="1995" name="Proc. Natl. Acad. Sci. U.S.A.">
        <title>The nucleotide sequence of chromosome I from Saccharomyces cerevisiae.</title>
        <authorList>
            <person name="Bussey H."/>
            <person name="Kaback D.B."/>
            <person name="Zhong W.-W."/>
            <person name="Vo D.H."/>
            <person name="Clark M.W."/>
            <person name="Fortin N."/>
            <person name="Hall J."/>
            <person name="Ouellette B.F.F."/>
            <person name="Keng T."/>
            <person name="Barton A.B."/>
            <person name="Su Y."/>
            <person name="Davies C.J."/>
            <person name="Storms R.K."/>
        </authorList>
    </citation>
    <scope>NUCLEOTIDE SEQUENCE [LARGE SCALE GENOMIC DNA]</scope>
    <source>
        <strain>ATCC 204508 / S288c</strain>
    </source>
</reference>
<reference key="3">
    <citation type="submission" date="1996-04" db="EMBL/GenBank/DDBJ databases">
        <authorList>
            <person name="Vo D.T."/>
        </authorList>
    </citation>
    <scope>SEQUENCE REVISION</scope>
</reference>
<reference key="4">
    <citation type="journal article" date="2014" name="G3 (Bethesda)">
        <title>The reference genome sequence of Saccharomyces cerevisiae: Then and now.</title>
        <authorList>
            <person name="Engel S.R."/>
            <person name="Dietrich F.S."/>
            <person name="Fisk D.G."/>
            <person name="Binkley G."/>
            <person name="Balakrishnan R."/>
            <person name="Costanzo M.C."/>
            <person name="Dwight S.S."/>
            <person name="Hitz B.C."/>
            <person name="Karra K."/>
            <person name="Nash R.S."/>
            <person name="Weng S."/>
            <person name="Wong E.D."/>
            <person name="Lloyd P."/>
            <person name="Skrzypek M.S."/>
            <person name="Miyasato S.R."/>
            <person name="Simison M."/>
            <person name="Cherry J.M."/>
        </authorList>
    </citation>
    <scope>GENOME REANNOTATION</scope>
    <source>
        <strain>ATCC 204508 / S288c</strain>
    </source>
</reference>
<reference key="5">
    <citation type="journal article" date="2002" name="Eukaryot. Cell">
        <title>Nnf1p, Dsn1p, Mtw1p, and Nsl1p: a new group of proteins important for chromosome segregation in Saccharomyces cerevisiae.</title>
        <authorList>
            <person name="Euskirchen G.M."/>
        </authorList>
    </citation>
    <scope>SUBCELLULAR LOCATION</scope>
</reference>
<reference key="6">
    <citation type="journal article" date="2003" name="Dev. Cell">
        <title>An Mtw1 complex promotes kinetochore biorientation that is monitored by the Ipl1/Aurora protein kinase.</title>
        <authorList>
            <person name="Pinsky B.A."/>
            <person name="Tatsutani S.Y."/>
            <person name="Collins K.A."/>
            <person name="Biggins S."/>
        </authorList>
    </citation>
    <scope>FUNCTION</scope>
    <scope>IDENTIFICATION IN THE MIND COMPLEX</scope>
    <scope>SUBCELLULAR LOCATION</scope>
</reference>
<reference key="7">
    <citation type="journal article" date="2003" name="EMBO J.">
        <title>Nsl1p is essential for the establishment of bipolarity and the localization of the Dam-Duo complex.</title>
        <authorList>
            <person name="Scharfenberger M."/>
            <person name="Ortiz J."/>
            <person name="Grau N."/>
            <person name="Janke C."/>
            <person name="Schiebel E."/>
            <person name="Lechner J."/>
        </authorList>
    </citation>
    <scope>IDENTIFICATION IN THE MIND COMPLEX</scope>
    <scope>SUBCELLULAR LOCATION</scope>
</reference>
<reference key="8">
    <citation type="journal article" date="2003" name="Genes Dev.">
        <title>Hierarchical assembly of the budding yeast kinetochore from multiple subcomplexes.</title>
        <authorList>
            <person name="De Wulf P."/>
            <person name="McAinsh A.D."/>
            <person name="Sorger P.K."/>
        </authorList>
    </citation>
    <scope>IDENTIFICATION IN THE MIND COMPLEX</scope>
    <scope>FUNCTION OF THE MIND COMPLEX</scope>
</reference>
<reference key="9">
    <citation type="journal article" date="2003" name="Mol. Cell">
        <title>Assigning function to yeast proteins by integration of technologies.</title>
        <authorList>
            <person name="Hazbun T.R."/>
            <person name="Malmstroem L."/>
            <person name="Anderson S."/>
            <person name="Graczyk B.J."/>
            <person name="Fox B."/>
            <person name="Riffle M."/>
            <person name="Sundin B.A."/>
            <person name="Aranda J.D."/>
            <person name="McDonald W.H."/>
            <person name="Chiu C.-H."/>
            <person name="Snydsman B.E."/>
            <person name="Bradley P."/>
            <person name="Muller E.G.D."/>
            <person name="Fields S."/>
            <person name="Baker D."/>
            <person name="Yates J.R. III"/>
            <person name="Davis T.N."/>
        </authorList>
    </citation>
    <scope>IDENTIFICATION BY MASS SPECTROMETRY</scope>
</reference>
<reference key="10">
    <citation type="journal article" date="2003" name="Nature">
        <title>Global analysis of protein expression in yeast.</title>
        <authorList>
            <person name="Ghaemmaghami S."/>
            <person name="Huh W.-K."/>
            <person name="Bower K."/>
            <person name="Howson R.W."/>
            <person name="Belle A."/>
            <person name="Dephoure N."/>
            <person name="O'Shea E.K."/>
            <person name="Weissman J.S."/>
        </authorList>
    </citation>
    <scope>LEVEL OF PROTEIN EXPRESSION [LARGE SCALE ANALYSIS]</scope>
</reference>
<keyword id="KW-0131">Cell cycle</keyword>
<keyword id="KW-0132">Cell division</keyword>
<keyword id="KW-0137">Centromere</keyword>
<keyword id="KW-0158">Chromosome</keyword>
<keyword id="KW-0175">Coiled coil</keyword>
<keyword id="KW-0963">Cytoplasm</keyword>
<keyword id="KW-0206">Cytoskeleton</keyword>
<keyword id="KW-0995">Kinetochore</keyword>
<keyword id="KW-0498">Mitosis</keyword>
<keyword id="KW-1185">Reference proteome</keyword>
<feature type="chain" id="PRO_0000096641" description="Kinetochore-associated protein MTW1">
    <location>
        <begin position="1"/>
        <end position="289"/>
    </location>
</feature>
<feature type="coiled-coil region" evidence="1">
    <location>
        <begin position="105"/>
        <end position="147"/>
    </location>
</feature>
<accession>P39731</accession>
<accession>D6VPI3</accession>
<dbReference type="EMBL" id="AB027473">
    <property type="protein sequence ID" value="BAA77792.1"/>
    <property type="molecule type" value="Genomic_DNA"/>
</dbReference>
<dbReference type="EMBL" id="U12980">
    <property type="protein sequence ID" value="AAC04997.1"/>
    <property type="molecule type" value="Genomic_DNA"/>
</dbReference>
<dbReference type="EMBL" id="BK006935">
    <property type="protein sequence ID" value="DAA06953.1"/>
    <property type="molecule type" value="Genomic_DNA"/>
</dbReference>
<dbReference type="PIR" id="S70293">
    <property type="entry name" value="S70293"/>
</dbReference>
<dbReference type="RefSeq" id="NP_009367.1">
    <property type="nucleotide sequence ID" value="NM_001178179.1"/>
</dbReference>
<dbReference type="SMR" id="P39731"/>
<dbReference type="BioGRID" id="31731">
    <property type="interactions" value="204"/>
</dbReference>
<dbReference type="ComplexPortal" id="CPX-1156">
    <property type="entry name" value="Central kinetochore CTF19 complex"/>
</dbReference>
<dbReference type="ComplexPortal" id="CPX-1186">
    <property type="entry name" value="Kinetochore MIS12 complex"/>
</dbReference>
<dbReference type="DIP" id="DIP-1464N"/>
<dbReference type="FunCoup" id="P39731">
    <property type="interactions" value="118"/>
</dbReference>
<dbReference type="IntAct" id="P39731">
    <property type="interactions" value="19"/>
</dbReference>
<dbReference type="MINT" id="P39731"/>
<dbReference type="STRING" id="4932.YAL034W-A"/>
<dbReference type="iPTMnet" id="P39731"/>
<dbReference type="PaxDb" id="4932-YAL034W-A"/>
<dbReference type="PeptideAtlas" id="P39731"/>
<dbReference type="EnsemblFungi" id="YAL034W-A_mRNA">
    <property type="protein sequence ID" value="YAL034W-A"/>
    <property type="gene ID" value="YAL034W-A"/>
</dbReference>
<dbReference type="GeneID" id="851197"/>
<dbReference type="KEGG" id="sce:YAL034W-A"/>
<dbReference type="AGR" id="SGD:S000000032"/>
<dbReference type="SGD" id="S000000032">
    <property type="gene designation" value="MTW1"/>
</dbReference>
<dbReference type="VEuPathDB" id="FungiDB:YAL034W-A"/>
<dbReference type="eggNOG" id="ENOG502S72R">
    <property type="taxonomic scope" value="Eukaryota"/>
</dbReference>
<dbReference type="HOGENOM" id="CLU_046437_0_0_1"/>
<dbReference type="InParanoid" id="P39731"/>
<dbReference type="OMA" id="CTQAMET"/>
<dbReference type="OrthoDB" id="1884855at2759"/>
<dbReference type="BioCyc" id="YEAST:G3O-28844-MONOMER"/>
<dbReference type="BioGRID-ORCS" id="851197">
    <property type="hits" value="1 hit in 10 CRISPR screens"/>
</dbReference>
<dbReference type="CD-CODE" id="876000F7">
    <property type="entry name" value="Centrosome"/>
</dbReference>
<dbReference type="PRO" id="PR:P39731"/>
<dbReference type="Proteomes" id="UP000002311">
    <property type="component" value="Chromosome I"/>
</dbReference>
<dbReference type="RNAct" id="P39731">
    <property type="molecule type" value="protein"/>
</dbReference>
<dbReference type="GO" id="GO:0005737">
    <property type="term" value="C:cytoplasm"/>
    <property type="evidence" value="ECO:0007669"/>
    <property type="project" value="UniProtKB-KW"/>
</dbReference>
<dbReference type="GO" id="GO:0000776">
    <property type="term" value="C:kinetochore"/>
    <property type="evidence" value="ECO:0000353"/>
    <property type="project" value="ComplexPortal"/>
</dbReference>
<dbReference type="GO" id="GO:0000444">
    <property type="term" value="C:MIS12/MIND type complex"/>
    <property type="evidence" value="ECO:0000314"/>
    <property type="project" value="SGD"/>
</dbReference>
<dbReference type="GO" id="GO:0005634">
    <property type="term" value="C:nucleus"/>
    <property type="evidence" value="ECO:0000314"/>
    <property type="project" value="ComplexPortal"/>
</dbReference>
<dbReference type="GO" id="GO:0000940">
    <property type="term" value="C:outer kinetochore"/>
    <property type="evidence" value="ECO:0000314"/>
    <property type="project" value="UniProtKB"/>
</dbReference>
<dbReference type="GO" id="GO:0000922">
    <property type="term" value="C:spindle pole"/>
    <property type="evidence" value="ECO:0000314"/>
    <property type="project" value="SGD"/>
</dbReference>
<dbReference type="GO" id="GO:0008608">
    <property type="term" value="P:attachment of spindle microtubules to kinetochore"/>
    <property type="evidence" value="ECO:0000303"/>
    <property type="project" value="ComplexPortal"/>
</dbReference>
<dbReference type="GO" id="GO:0051301">
    <property type="term" value="P:cell division"/>
    <property type="evidence" value="ECO:0007669"/>
    <property type="project" value="UniProtKB-KW"/>
</dbReference>
<dbReference type="GO" id="GO:0007059">
    <property type="term" value="P:chromosome segregation"/>
    <property type="evidence" value="ECO:0000314"/>
    <property type="project" value="SGD"/>
</dbReference>
<dbReference type="GO" id="GO:0051382">
    <property type="term" value="P:kinetochore assembly"/>
    <property type="evidence" value="ECO:0000318"/>
    <property type="project" value="GO_Central"/>
</dbReference>
<dbReference type="GO" id="GO:0000070">
    <property type="term" value="P:mitotic sister chromatid segregation"/>
    <property type="evidence" value="ECO:0000318"/>
    <property type="project" value="GO_Central"/>
</dbReference>
<dbReference type="GO" id="GO:0034501">
    <property type="term" value="P:protein localization to kinetochore"/>
    <property type="evidence" value="ECO:0000315"/>
    <property type="project" value="SGD"/>
</dbReference>
<dbReference type="InterPro" id="IPR008685">
    <property type="entry name" value="Centromere_Mis12"/>
</dbReference>
<dbReference type="PANTHER" id="PTHR14527">
    <property type="entry name" value="PROTEIN MIS12 HOMOLOG"/>
    <property type="match status" value="1"/>
</dbReference>
<dbReference type="PANTHER" id="PTHR14527:SF2">
    <property type="entry name" value="PROTEIN MIS12 HOMOLOG"/>
    <property type="match status" value="1"/>
</dbReference>
<dbReference type="Pfam" id="PF05859">
    <property type="entry name" value="Mis12"/>
    <property type="match status" value="1"/>
</dbReference>
<evidence type="ECO:0000255" key="1"/>
<evidence type="ECO:0000269" key="2">
    <source>
    </source>
</evidence>
<evidence type="ECO:0000269" key="3">
    <source>
    </source>
</evidence>
<evidence type="ECO:0000269" key="4">
    <source>
    </source>
</evidence>
<evidence type="ECO:0000269" key="5">
    <source>
    </source>
</evidence>
<evidence type="ECO:0000269" key="6">
    <source>
    </source>
</evidence>
<evidence type="ECO:0000305" key="7"/>
<protein>
    <recommendedName>
        <fullName>Kinetochore-associated protein MTW1</fullName>
    </recommendedName>
    <alternativeName>
        <fullName>Mis12-like protein</fullName>
    </alternativeName>
</protein>
<name>MTW1_YEAST</name>
<organism>
    <name type="scientific">Saccharomyces cerevisiae (strain ATCC 204508 / S288c)</name>
    <name type="common">Baker's yeast</name>
    <dbReference type="NCBI Taxonomy" id="559292"/>
    <lineage>
        <taxon>Eukaryota</taxon>
        <taxon>Fungi</taxon>
        <taxon>Dikarya</taxon>
        <taxon>Ascomycota</taxon>
        <taxon>Saccharomycotina</taxon>
        <taxon>Saccharomycetes</taxon>
        <taxon>Saccharomycetales</taxon>
        <taxon>Saccharomycetaceae</taxon>
        <taxon>Saccharomyces</taxon>
    </lineage>
</organism>